<protein>
    <recommendedName>
        <fullName evidence="1">Phosphatidylserine decarboxylase proenzyme</fullName>
        <ecNumber evidence="1">4.1.1.65</ecNumber>
    </recommendedName>
    <component>
        <recommendedName>
            <fullName evidence="1">Phosphatidylserine decarboxylase alpha chain</fullName>
        </recommendedName>
    </component>
    <component>
        <recommendedName>
            <fullName evidence="1">Phosphatidylserine decarboxylase beta chain</fullName>
        </recommendedName>
    </component>
</protein>
<gene>
    <name evidence="1" type="primary">psd</name>
    <name type="ordered locus">RALTA_A1022</name>
</gene>
<comment type="function">
    <text evidence="1">Catalyzes the formation of phosphatidylethanolamine (PtdEtn) from phosphatidylserine (PtdSer).</text>
</comment>
<comment type="catalytic activity">
    <reaction evidence="1">
        <text>a 1,2-diacyl-sn-glycero-3-phospho-L-serine + H(+) = a 1,2-diacyl-sn-glycero-3-phosphoethanolamine + CO2</text>
        <dbReference type="Rhea" id="RHEA:20828"/>
        <dbReference type="ChEBI" id="CHEBI:15378"/>
        <dbReference type="ChEBI" id="CHEBI:16526"/>
        <dbReference type="ChEBI" id="CHEBI:57262"/>
        <dbReference type="ChEBI" id="CHEBI:64612"/>
        <dbReference type="EC" id="4.1.1.65"/>
    </reaction>
</comment>
<comment type="cofactor">
    <cofactor evidence="1">
        <name>pyruvate</name>
        <dbReference type="ChEBI" id="CHEBI:15361"/>
    </cofactor>
    <text evidence="1">Binds 1 pyruvoyl group covalently per subunit.</text>
</comment>
<comment type="pathway">
    <text evidence="1">Phospholipid metabolism; phosphatidylethanolamine biosynthesis; phosphatidylethanolamine from CDP-diacylglycerol: step 2/2.</text>
</comment>
<comment type="subunit">
    <text evidence="1">Heterodimer of a large membrane-associated beta subunit and a small pyruvoyl-containing alpha subunit.</text>
</comment>
<comment type="subcellular location">
    <subcellularLocation>
        <location evidence="1">Cell membrane</location>
        <topology evidence="1">Peripheral membrane protein</topology>
    </subcellularLocation>
</comment>
<comment type="PTM">
    <text evidence="1">Is synthesized initially as an inactive proenzyme. Formation of the active enzyme involves a self-maturation process in which the active site pyruvoyl group is generated from an internal serine residue via an autocatalytic post-translational modification. Two non-identical subunits are generated from the proenzyme in this reaction, and the pyruvate is formed at the N-terminus of the alpha chain, which is derived from the carboxyl end of the proenzyme. The post-translation cleavage follows an unusual pathway, termed non-hydrolytic serinolysis, in which the side chain hydroxyl group of the serine supplies its oxygen atom to form the C-terminus of the beta chain, while the remainder of the serine residue undergoes an oxidative deamination to produce ammonia and the pyruvoyl prosthetic group on the alpha chain.</text>
</comment>
<comment type="similarity">
    <text evidence="1">Belongs to the phosphatidylserine decarboxylase family. PSD-A subfamily.</text>
</comment>
<organism>
    <name type="scientific">Cupriavidus taiwanensis (strain DSM 17343 / BCRC 17206 / CCUG 44338 / CIP 107171 / LMG 19424 / R1)</name>
    <name type="common">Ralstonia taiwanensis (strain LMG 19424)</name>
    <dbReference type="NCBI Taxonomy" id="977880"/>
    <lineage>
        <taxon>Bacteria</taxon>
        <taxon>Pseudomonadati</taxon>
        <taxon>Pseudomonadota</taxon>
        <taxon>Betaproteobacteria</taxon>
        <taxon>Burkholderiales</taxon>
        <taxon>Burkholderiaceae</taxon>
        <taxon>Cupriavidus</taxon>
    </lineage>
</organism>
<keyword id="KW-1003">Cell membrane</keyword>
<keyword id="KW-0210">Decarboxylase</keyword>
<keyword id="KW-0444">Lipid biosynthesis</keyword>
<keyword id="KW-0443">Lipid metabolism</keyword>
<keyword id="KW-0456">Lyase</keyword>
<keyword id="KW-0472">Membrane</keyword>
<keyword id="KW-0594">Phospholipid biosynthesis</keyword>
<keyword id="KW-1208">Phospholipid metabolism</keyword>
<keyword id="KW-0670">Pyruvate</keyword>
<keyword id="KW-0865">Zymogen</keyword>
<sequence length="216" mass="23923">MNYPHPLIAREGWPFLAGAFVISLLVHASAGFWWALPLWIITVFVLQFFRDPPRPIPSAPNAVLAPADGRIVVVEKTMDPYANREALKISVFMNVFNVHSNRVSVDGAVEKVEYFPGKFVNADLDKASTENERNAVVIRRAADGQVVTLVQVAGLVARRILCYTKAGENLSRGQRYGFIRFGSRVDVYLPLDARPRVTIGEKVSASSTILAELDVK</sequence>
<evidence type="ECO:0000255" key="1">
    <source>
        <dbReference type="HAMAP-Rule" id="MF_00664"/>
    </source>
</evidence>
<reference key="1">
    <citation type="journal article" date="2008" name="Genome Res.">
        <title>Genome sequence of the beta-rhizobium Cupriavidus taiwanensis and comparative genomics of rhizobia.</title>
        <authorList>
            <person name="Amadou C."/>
            <person name="Pascal G."/>
            <person name="Mangenot S."/>
            <person name="Glew M."/>
            <person name="Bontemps C."/>
            <person name="Capela D."/>
            <person name="Carrere S."/>
            <person name="Cruveiller S."/>
            <person name="Dossat C."/>
            <person name="Lajus A."/>
            <person name="Marchetti M."/>
            <person name="Poinsot V."/>
            <person name="Rouy Z."/>
            <person name="Servin B."/>
            <person name="Saad M."/>
            <person name="Schenowitz C."/>
            <person name="Barbe V."/>
            <person name="Batut J."/>
            <person name="Medigue C."/>
            <person name="Masson-Boivin C."/>
        </authorList>
    </citation>
    <scope>NUCLEOTIDE SEQUENCE [LARGE SCALE GENOMIC DNA]</scope>
    <source>
        <strain>DSM 17343 / BCRC 17206 / CCUG 44338 / CIP 107171 / LMG 19424 / R1</strain>
    </source>
</reference>
<accession>B3R3V5</accession>
<name>PSD_CUPTR</name>
<proteinExistence type="inferred from homology"/>
<dbReference type="EC" id="4.1.1.65" evidence="1"/>
<dbReference type="EMBL" id="CU633749">
    <property type="protein sequence ID" value="CAQ68987.1"/>
    <property type="molecule type" value="Genomic_DNA"/>
</dbReference>
<dbReference type="RefSeq" id="WP_012352319.1">
    <property type="nucleotide sequence ID" value="NC_010528.1"/>
</dbReference>
<dbReference type="GeneID" id="29761446"/>
<dbReference type="KEGG" id="cti:RALTA_A1022"/>
<dbReference type="eggNOG" id="COG0688">
    <property type="taxonomic scope" value="Bacteria"/>
</dbReference>
<dbReference type="HOGENOM" id="CLU_072492_0_0_4"/>
<dbReference type="BioCyc" id="CTAI977880:RALTA_RS04855-MONOMER"/>
<dbReference type="UniPathway" id="UPA00558">
    <property type="reaction ID" value="UER00616"/>
</dbReference>
<dbReference type="Proteomes" id="UP000001692">
    <property type="component" value="Chromosome 1"/>
</dbReference>
<dbReference type="GO" id="GO:0005886">
    <property type="term" value="C:plasma membrane"/>
    <property type="evidence" value="ECO:0007669"/>
    <property type="project" value="UniProtKB-SubCell"/>
</dbReference>
<dbReference type="GO" id="GO:0004609">
    <property type="term" value="F:phosphatidylserine decarboxylase activity"/>
    <property type="evidence" value="ECO:0007669"/>
    <property type="project" value="UniProtKB-UniRule"/>
</dbReference>
<dbReference type="GO" id="GO:0006646">
    <property type="term" value="P:phosphatidylethanolamine biosynthetic process"/>
    <property type="evidence" value="ECO:0007669"/>
    <property type="project" value="UniProtKB-UniRule"/>
</dbReference>
<dbReference type="HAMAP" id="MF_00664">
    <property type="entry name" value="PS_decarb_PSD_A"/>
    <property type="match status" value="1"/>
</dbReference>
<dbReference type="InterPro" id="IPR003817">
    <property type="entry name" value="PS_Dcarbxylase"/>
</dbReference>
<dbReference type="InterPro" id="IPR033175">
    <property type="entry name" value="PSD-A"/>
</dbReference>
<dbReference type="NCBIfam" id="TIGR00164">
    <property type="entry name" value="AS_decarb"/>
    <property type="match status" value="1"/>
</dbReference>
<dbReference type="NCBIfam" id="NF003678">
    <property type="entry name" value="PRK05305.1-2"/>
    <property type="match status" value="1"/>
</dbReference>
<dbReference type="NCBIfam" id="NF003680">
    <property type="entry name" value="PRK05305.1-5"/>
    <property type="match status" value="1"/>
</dbReference>
<dbReference type="PANTHER" id="PTHR35809">
    <property type="entry name" value="ARCHAETIDYLSERINE DECARBOXYLASE PROENZYME-RELATED"/>
    <property type="match status" value="1"/>
</dbReference>
<dbReference type="PANTHER" id="PTHR35809:SF1">
    <property type="entry name" value="ARCHAETIDYLSERINE DECARBOXYLASE PROENZYME-RELATED"/>
    <property type="match status" value="1"/>
</dbReference>
<dbReference type="Pfam" id="PF02666">
    <property type="entry name" value="PS_Dcarbxylase"/>
    <property type="match status" value="1"/>
</dbReference>
<feature type="chain" id="PRO_1000131464" description="Phosphatidylserine decarboxylase beta chain" evidence="1">
    <location>
        <begin position="1"/>
        <end position="182"/>
    </location>
</feature>
<feature type="chain" id="PRO_1000131465" description="Phosphatidylserine decarboxylase alpha chain" evidence="1">
    <location>
        <begin position="183"/>
        <end position="216"/>
    </location>
</feature>
<feature type="active site" description="Schiff-base intermediate with substrate; via pyruvic acid" evidence="1">
    <location>
        <position position="183"/>
    </location>
</feature>
<feature type="site" description="Cleavage (non-hydrolytic); by autocatalysis" evidence="1">
    <location>
        <begin position="182"/>
        <end position="183"/>
    </location>
</feature>
<feature type="modified residue" description="Pyruvic acid (Ser); by autocatalysis" evidence="1">
    <location>
        <position position="183"/>
    </location>
</feature>